<name>AGGF1_HUMAN</name>
<gene>
    <name type="primary">AGGF1</name>
    <name type="synonym">GPATC7</name>
    <name type="synonym">GPATCH7</name>
    <name type="synonym">VG5Q</name>
</gene>
<protein>
    <recommendedName>
        <fullName>Angiogenic factor with G patch and FHA domains 1</fullName>
    </recommendedName>
    <alternativeName>
        <fullName>Angiogenic factor VG5Q</fullName>
        <shortName>hVG5Q</shortName>
    </alternativeName>
    <alternativeName>
        <fullName>G patch domain-containing protein 7</fullName>
    </alternativeName>
    <alternativeName>
        <fullName>Vasculogenesis gene on 5q protein</fullName>
    </alternativeName>
</protein>
<organism>
    <name type="scientific">Homo sapiens</name>
    <name type="common">Human</name>
    <dbReference type="NCBI Taxonomy" id="9606"/>
    <lineage>
        <taxon>Eukaryota</taxon>
        <taxon>Metazoa</taxon>
        <taxon>Chordata</taxon>
        <taxon>Craniata</taxon>
        <taxon>Vertebrata</taxon>
        <taxon>Euteleostomi</taxon>
        <taxon>Mammalia</taxon>
        <taxon>Eutheria</taxon>
        <taxon>Euarchontoglires</taxon>
        <taxon>Primates</taxon>
        <taxon>Haplorrhini</taxon>
        <taxon>Catarrhini</taxon>
        <taxon>Hominidae</taxon>
        <taxon>Homo</taxon>
    </lineage>
</organism>
<comment type="function">
    <text evidence="5">Promotes angiogenesis and the proliferation of endothelial cells. Able to bind to endothelial cells and promote cell proliferation, suggesting that it may act in an autocrine fashion.</text>
</comment>
<comment type="subunit">
    <text evidence="5">Interacts with the secreted angiogenic factor TNFSF12.</text>
</comment>
<comment type="interaction">
    <interactant intactId="EBI-747899">
        <id>Q8N302</id>
    </interactant>
    <interactant intactId="EBI-747899">
        <id>Q8N302</id>
        <label>AGGF1</label>
    </interactant>
    <organismsDiffer>false</organismsDiffer>
    <experiments>3</experiments>
</comment>
<comment type="interaction">
    <interactant intactId="EBI-747899">
        <id>Q8N302</id>
    </interactant>
    <interactant intactId="EBI-465781">
        <id>Q9UL45</id>
        <label>BLOC1S6</label>
    </interactant>
    <organismsDiffer>false</organismsDiffer>
    <experiments>3</experiments>
</comment>
<comment type="interaction">
    <interactant intactId="EBI-747899">
        <id>Q8N302</id>
    </interactant>
    <interactant intactId="EBI-1237044">
        <id>O43143</id>
        <label>DHX15</label>
    </interactant>
    <organismsDiffer>false</organismsDiffer>
    <experiments>3</experiments>
</comment>
<comment type="interaction">
    <interactant intactId="EBI-747899">
        <id>Q8N302</id>
    </interactant>
    <interactant intactId="EBI-740282">
        <id>Q9NVF7</id>
        <label>FBXO28</label>
    </interactant>
    <organismsDiffer>false</organismsDiffer>
    <experiments>3</experiments>
</comment>
<comment type="interaction">
    <interactant intactId="EBI-747899">
        <id>Q8N302</id>
    </interactant>
    <interactant intactId="EBI-10268010">
        <id>Q8N8X9</id>
        <label>MAB21L3</label>
    </interactant>
    <organismsDiffer>false</organismsDiffer>
    <experiments>4</experiments>
</comment>
<comment type="interaction">
    <interactant intactId="EBI-747899">
        <id>Q8N302</id>
    </interactant>
    <interactant intactId="EBI-348259">
        <id>Q96EZ8</id>
        <label>MCRS1</label>
    </interactant>
    <organismsDiffer>false</organismsDiffer>
    <experiments>3</experiments>
</comment>
<comment type="interaction">
    <interactant intactId="EBI-25838028">
        <id>Q8N302-2</id>
    </interactant>
    <interactant intactId="EBI-25837549">
        <id>P28329-3</id>
        <label>CHAT</label>
    </interactant>
    <organismsDiffer>false</organismsDiffer>
    <experiments>3</experiments>
</comment>
<comment type="interaction">
    <interactant intactId="EBI-25838028">
        <id>Q8N302-2</id>
    </interactant>
    <interactant intactId="EBI-348399">
        <id>P22607</id>
        <label>FGFR3</label>
    </interactant>
    <organismsDiffer>false</organismsDiffer>
    <experiments>3</experiments>
</comment>
<comment type="interaction">
    <interactant intactId="EBI-25838028">
        <id>Q8N302-2</id>
    </interactant>
    <interactant intactId="EBI-351506">
        <id>P06396</id>
        <label>GSN</label>
    </interactant>
    <organismsDiffer>false</organismsDiffer>
    <experiments>3</experiments>
</comment>
<comment type="interaction">
    <interactant intactId="EBI-25838028">
        <id>Q8N302-2</id>
    </interactant>
    <interactant intactId="EBI-748974">
        <id>Q96CV9</id>
        <label>OPTN</label>
    </interactant>
    <organismsDiffer>false</organismsDiffer>
    <experiments>3</experiments>
</comment>
<comment type="interaction">
    <interactant intactId="EBI-25838028">
        <id>Q8N302-2</id>
    </interactant>
    <interactant intactId="EBI-716404">
        <id>P16284</id>
        <label>PECAM1</label>
    </interactant>
    <organismsDiffer>false</organismsDiffer>
    <experiments>3</experiments>
</comment>
<comment type="interaction">
    <interactant intactId="EBI-25838028">
        <id>Q8N302-2</id>
    </interactant>
    <interactant intactId="EBI-2559665">
        <id>Q5JTV8</id>
        <label>TOR1AIP1</label>
    </interactant>
    <organismsDiffer>false</organismsDiffer>
    <experiments>3</experiments>
</comment>
<comment type="interaction">
    <interactant intactId="EBI-25838028">
        <id>Q8N302-2</id>
    </interactant>
    <interactant intactId="EBI-353844">
        <id>P08670</id>
        <label>VIM</label>
    </interactant>
    <organismsDiffer>false</organismsDiffer>
    <experiments>3</experiments>
</comment>
<comment type="interaction">
    <interactant intactId="EBI-25838028">
        <id>Q8N302-2</id>
    </interactant>
    <interactant intactId="EBI-25900580">
        <id>Q9Y649</id>
    </interactant>
    <organismsDiffer>false</organismsDiffer>
    <experiments>3</experiments>
</comment>
<comment type="subcellular location">
    <subcellularLocation>
        <location evidence="5">Cytoplasm</location>
    </subcellularLocation>
    <subcellularLocation>
        <location evidence="5">Secreted</location>
    </subcellularLocation>
    <text>Cytoplasmic in microvascular endothelial cells. Upon angiogenesis, when endothelial cell tube formation is initiated, it is secreted.</text>
</comment>
<comment type="alternative products">
    <event type="alternative splicing"/>
    <isoform>
        <id>Q8N302-1</id>
        <name>1</name>
        <sequence type="displayed"/>
    </isoform>
    <isoform>
        <id>Q8N302-2</id>
        <name>2</name>
        <sequence type="described" ref="VSP_009631 VSP_009632"/>
    </isoform>
    <isoform>
        <id>Q8N302-3</id>
        <name>3</name>
        <sequence type="described" ref="VSP_009633 VSP_009634"/>
    </isoform>
</comment>
<comment type="tissue specificity">
    <text evidence="5">Widely expressed. Expressed in endothelial cells, vascular smooth muscle cells and osteoblasts. Expressed in umbilical vein endothelial cells and microvascular endothelial cells.</text>
</comment>
<comment type="sequence caution" evidence="9">
    <conflict type="erroneous termination">
        <sequence resource="EMBL-CDS" id="AAH29382"/>
    </conflict>
    <text>Truncated C-terminus.</text>
</comment>
<comment type="sequence caution" evidence="9">
    <conflict type="erroneous initiation">
        <sequence resource="EMBL-CDS" id="BAA91519"/>
    </conflict>
</comment>
<sequence>MASEAPSPPRSPPPPTSPEPELAQLRRKVEKLERELRSCKRQVREIEKLLHHTERLYQNAESNNQELRTQVEELSKILQRGRNEDNKKSDVEVQTENHAPWSISDYFYQTYYNDVSLPNKVTELSDQQDQAIETSILNSKDHLQVENDAYPGTDRTENVKYRQVDHFASNSQEPASALATEDTSLEGSSLAESLRAAAEAAVSQTGFSYDENTGLYFDHSTGFYYDSENQLYYDPSTGIYYYCDVESGRYQFHSRVDLQPYPTSSTKQSKDKKLKKKRKDPDSSATNEEKDLNSEDQKAFSVEHTSCNEEENFANMKKKAKIGIHHKNSPPKVTVPTSGNTIESPLHENISNSTSFKDEKIMETDSEPEEGEITDSQTEDSYDEAITSEGNVTAEDSEDEDEDKIWPPCIRVIVIRSPVLQIGSLFIITAVNPATIGREKDMEHTLRIPEVGVSKFHAEIYFDHDLQSYVLVDQGSQNGTIVNGKQILQPKTKCDPYVLEHGDEVKIGETVLSFHIHPGSDTCDGCEPGQVRAHLRLDKKDESFVGPTLSKEEKELERRKELKKIRVKYGLQNTEYEDEKTLKNPKYKDRAGKRREQVGSEGTFQRDDAPASVHSEITDSNKGRKMLEKMGWKKGEGLGKDGGGMKTPIQLQLRRTHAGLGTGKPSSFEDVHLLQNKNKKNWDKARERFTENFPETKPQKDDPGTMPWVKGTLE</sequence>
<feature type="initiator methionine" description="Removed" evidence="10">
    <location>
        <position position="1"/>
    </location>
</feature>
<feature type="chain" id="PRO_0000064495" description="Angiogenic factor with G patch and FHA domains 1">
    <location>
        <begin position="2"/>
        <end position="714"/>
    </location>
</feature>
<feature type="domain" description="FHA" evidence="2">
    <location>
        <begin position="434"/>
        <end position="487"/>
    </location>
</feature>
<feature type="domain" description="G-patch" evidence="3">
    <location>
        <begin position="619"/>
        <end position="665"/>
    </location>
</feature>
<feature type="region of interest" description="Disordered" evidence="4">
    <location>
        <begin position="1"/>
        <end position="22"/>
    </location>
</feature>
<feature type="region of interest" description="Disordered" evidence="4">
    <location>
        <begin position="259"/>
        <end position="307"/>
    </location>
</feature>
<feature type="region of interest" description="Disordered" evidence="4">
    <location>
        <begin position="322"/>
        <end position="384"/>
    </location>
</feature>
<feature type="region of interest" description="Disordered" evidence="4">
    <location>
        <begin position="586"/>
        <end position="617"/>
    </location>
</feature>
<feature type="region of interest" description="Disordered" evidence="4">
    <location>
        <begin position="655"/>
        <end position="714"/>
    </location>
</feature>
<feature type="coiled-coil region" evidence="1">
    <location>
        <begin position="18"/>
        <end position="88"/>
    </location>
</feature>
<feature type="compositionally biased region" description="Pro residues" evidence="4">
    <location>
        <begin position="1"/>
        <end position="18"/>
    </location>
</feature>
<feature type="compositionally biased region" description="Basic and acidic residues" evidence="4">
    <location>
        <begin position="279"/>
        <end position="298"/>
    </location>
</feature>
<feature type="compositionally biased region" description="Polar residues" evidence="4">
    <location>
        <begin position="335"/>
        <end position="355"/>
    </location>
</feature>
<feature type="compositionally biased region" description="Acidic residues" evidence="4">
    <location>
        <begin position="364"/>
        <end position="383"/>
    </location>
</feature>
<feature type="compositionally biased region" description="Basic and acidic residues" evidence="4">
    <location>
        <begin position="586"/>
        <end position="609"/>
    </location>
</feature>
<feature type="compositionally biased region" description="Basic and acidic residues" evidence="4">
    <location>
        <begin position="680"/>
        <end position="690"/>
    </location>
</feature>
<feature type="modified residue" description="N-acetylalanine" evidence="10">
    <location>
        <position position="2"/>
    </location>
</feature>
<feature type="modified residue" description="Phosphoserine" evidence="12">
    <location>
        <position position="7"/>
    </location>
</feature>
<feature type="modified residue" description="Phosphoserine" evidence="12">
    <location>
        <position position="11"/>
    </location>
</feature>
<feature type="modified residue" description="Phosphoserine" evidence="12">
    <location>
        <position position="344"/>
    </location>
</feature>
<feature type="modified residue" description="N6-acetyllysine" evidence="11">
    <location>
        <position position="664"/>
    </location>
</feature>
<feature type="splice variant" id="VSP_009631" description="In isoform 2." evidence="7">
    <original>EELSKILQRGRNEDNKKSDVEVQTENHAPWSISDYFYQ</original>
    <variation>RGPPQPRAPSSPGEAFEARDSLGRGPWQGLRTTVEYLK</variation>
    <location>
        <begin position="72"/>
        <end position="109"/>
    </location>
</feature>
<feature type="splice variant" id="VSP_009632" description="In isoform 2." evidence="7">
    <location>
        <begin position="110"/>
        <end position="714"/>
    </location>
</feature>
<feature type="splice variant" id="VSP_009633" description="In isoform 3." evidence="8">
    <original>EPAS</original>
    <variation>VIKC</variation>
    <location>
        <begin position="173"/>
        <end position="176"/>
    </location>
</feature>
<feature type="splice variant" id="VSP_009634" description="In isoform 3." evidence="8">
    <location>
        <begin position="177"/>
        <end position="714"/>
    </location>
</feature>
<feature type="sequence variant" id="VAR_017901" description="Displays a stronger angiogenic activity; dbSNP:rs34203073." evidence="5">
    <original>E</original>
    <variation>K</variation>
    <location>
        <position position="133"/>
    </location>
</feature>
<feature type="sequence variant" id="VAR_037446" description="In dbSNP:rs9715897.">
    <original>T</original>
    <variation>A</variation>
    <location>
        <position position="180"/>
    </location>
</feature>
<feature type="sequence variant" id="VAR_037447" description="In dbSNP:rs17856835." evidence="6">
    <original>L</original>
    <variation>P</variation>
    <location>
        <position position="471"/>
    </location>
</feature>
<feature type="sequence variant" id="VAR_017902" description="In dbSNP:rs34400049." evidence="5">
    <original>P</original>
    <variation>T</variation>
    <location>
        <position position="698"/>
    </location>
</feature>
<feature type="sequence conflict" description="In Ref. 4." evidence="9" ref="4">
    <original>E</original>
    <variation>G</variation>
    <location>
        <position position="370"/>
    </location>
</feature>
<accession>Q8N302</accession>
<accession>O00581</accession>
<accession>Q53YS3</accession>
<accession>Q9BU84</accession>
<accession>Q9NW66</accession>
<reference key="1">
    <citation type="journal article" date="2004" name="Nature">
        <title>Identification of an angiogenic factor that when mutated causes susceptibility to Klippel-Trenaunay syndrome.</title>
        <authorList>
            <person name="Tian X.-L."/>
            <person name="Kadaba R."/>
            <person name="You S.-A."/>
            <person name="Liu M."/>
            <person name="Timur A.A."/>
            <person name="Yang L."/>
            <person name="Chen Q."/>
            <person name="Szafranski P."/>
            <person name="Rao S."/>
            <person name="Wu L."/>
            <person name="Housman D.E."/>
            <person name="DiCorleto P.E."/>
            <person name="Driscoll D.J."/>
            <person name="Borrow J."/>
            <person name="Wang Q."/>
        </authorList>
    </citation>
    <scope>NUCLEOTIDE SEQUENCE [GENOMIC DNA / MRNA] (ISOFORM 1)</scope>
    <scope>FUNCTION</scope>
    <scope>SUBCELLULAR LOCATION</scope>
    <scope>TISSUE SPECIFICITY</scope>
    <scope>INTERACTION WITH TNFSF12</scope>
    <scope>VARIANTS LYS-133 AND THR-698</scope>
</reference>
<reference key="2">
    <citation type="submission" date="1997-01" db="EMBL/GenBank/DDBJ databases">
        <authorList>
            <person name="Dickson M.C."/>
            <person name="Heather L.J."/>
            <person name="Lyle L."/>
            <person name="Clark L.N.C."/>
            <person name="Deutekom J.C.T."/>
            <person name="Wright T.J."/>
            <person name="Flint J."/>
            <person name="Frants R.R."/>
            <person name="Hewitt J.E."/>
        </authorList>
    </citation>
    <scope>NUCLEOTIDE SEQUENCE [MRNA] (ISOFORM 3)</scope>
    <source>
        <tissue>Fetus</tissue>
    </source>
</reference>
<reference key="3">
    <citation type="journal article" date="2004" name="Genome Res.">
        <title>The status, quality, and expansion of the NIH full-length cDNA project: the Mammalian Gene Collection (MGC).</title>
        <authorList>
            <consortium name="The MGC Project Team"/>
        </authorList>
    </citation>
    <scope>NUCLEOTIDE SEQUENCE [LARGE SCALE MRNA] (ISOFORM 2)</scope>
    <scope>NUCLEOTIDE SEQUENCE [LARGE SCALE MRNA] OF 438-714 (ISOFORM 1)</scope>
    <scope>VARIANT PRO-471</scope>
    <source>
        <tissue>Melanoma</tissue>
    </source>
</reference>
<reference key="4">
    <citation type="journal article" date="2004" name="Nat. Genet.">
        <title>Complete sequencing and characterization of 21,243 full-length human cDNAs.</title>
        <authorList>
            <person name="Ota T."/>
            <person name="Suzuki Y."/>
            <person name="Nishikawa T."/>
            <person name="Otsuki T."/>
            <person name="Sugiyama T."/>
            <person name="Irie R."/>
            <person name="Wakamatsu A."/>
            <person name="Hayashi K."/>
            <person name="Sato H."/>
            <person name="Nagai K."/>
            <person name="Kimura K."/>
            <person name="Makita H."/>
            <person name="Sekine M."/>
            <person name="Obayashi M."/>
            <person name="Nishi T."/>
            <person name="Shibahara T."/>
            <person name="Tanaka T."/>
            <person name="Ishii S."/>
            <person name="Yamamoto J."/>
            <person name="Saito K."/>
            <person name="Kawai Y."/>
            <person name="Isono Y."/>
            <person name="Nakamura Y."/>
            <person name="Nagahari K."/>
            <person name="Murakami K."/>
            <person name="Yasuda T."/>
            <person name="Iwayanagi T."/>
            <person name="Wagatsuma M."/>
            <person name="Shiratori A."/>
            <person name="Sudo H."/>
            <person name="Hosoiri T."/>
            <person name="Kaku Y."/>
            <person name="Kodaira H."/>
            <person name="Kondo H."/>
            <person name="Sugawara M."/>
            <person name="Takahashi M."/>
            <person name="Kanda K."/>
            <person name="Yokoi T."/>
            <person name="Furuya T."/>
            <person name="Kikkawa E."/>
            <person name="Omura Y."/>
            <person name="Abe K."/>
            <person name="Kamihara K."/>
            <person name="Katsuta N."/>
            <person name="Sato K."/>
            <person name="Tanikawa M."/>
            <person name="Yamazaki M."/>
            <person name="Ninomiya K."/>
            <person name="Ishibashi T."/>
            <person name="Yamashita H."/>
            <person name="Murakawa K."/>
            <person name="Fujimori K."/>
            <person name="Tanai H."/>
            <person name="Kimata M."/>
            <person name="Watanabe M."/>
            <person name="Hiraoka S."/>
            <person name="Chiba Y."/>
            <person name="Ishida S."/>
            <person name="Ono Y."/>
            <person name="Takiguchi S."/>
            <person name="Watanabe S."/>
            <person name="Yosida M."/>
            <person name="Hotuta T."/>
            <person name="Kusano J."/>
            <person name="Kanehori K."/>
            <person name="Takahashi-Fujii A."/>
            <person name="Hara H."/>
            <person name="Tanase T.-O."/>
            <person name="Nomura Y."/>
            <person name="Togiya S."/>
            <person name="Komai F."/>
            <person name="Hara R."/>
            <person name="Takeuchi K."/>
            <person name="Arita M."/>
            <person name="Imose N."/>
            <person name="Musashino K."/>
            <person name="Yuuki H."/>
            <person name="Oshima A."/>
            <person name="Sasaki N."/>
            <person name="Aotsuka S."/>
            <person name="Yoshikawa Y."/>
            <person name="Matsunawa H."/>
            <person name="Ichihara T."/>
            <person name="Shiohata N."/>
            <person name="Sano S."/>
            <person name="Moriya S."/>
            <person name="Momiyama H."/>
            <person name="Satoh N."/>
            <person name="Takami S."/>
            <person name="Terashima Y."/>
            <person name="Suzuki O."/>
            <person name="Nakagawa S."/>
            <person name="Senoh A."/>
            <person name="Mizoguchi H."/>
            <person name="Goto Y."/>
            <person name="Shimizu F."/>
            <person name="Wakebe H."/>
            <person name="Hishigaki H."/>
            <person name="Watanabe T."/>
            <person name="Sugiyama A."/>
            <person name="Takemoto M."/>
            <person name="Kawakami B."/>
            <person name="Yamazaki M."/>
            <person name="Watanabe K."/>
            <person name="Kumagai A."/>
            <person name="Itakura S."/>
            <person name="Fukuzumi Y."/>
            <person name="Fujimori Y."/>
            <person name="Komiyama M."/>
            <person name="Tashiro H."/>
            <person name="Tanigami A."/>
            <person name="Fujiwara T."/>
            <person name="Ono T."/>
            <person name="Yamada K."/>
            <person name="Fujii Y."/>
            <person name="Ozaki K."/>
            <person name="Hirao M."/>
            <person name="Ohmori Y."/>
            <person name="Kawabata A."/>
            <person name="Hikiji T."/>
            <person name="Kobatake N."/>
            <person name="Inagaki H."/>
            <person name="Ikema Y."/>
            <person name="Okamoto S."/>
            <person name="Okitani R."/>
            <person name="Kawakami T."/>
            <person name="Noguchi S."/>
            <person name="Itoh T."/>
            <person name="Shigeta K."/>
            <person name="Senba T."/>
            <person name="Matsumura K."/>
            <person name="Nakajima Y."/>
            <person name="Mizuno T."/>
            <person name="Morinaga M."/>
            <person name="Sasaki M."/>
            <person name="Togashi T."/>
            <person name="Oyama M."/>
            <person name="Hata H."/>
            <person name="Watanabe M."/>
            <person name="Komatsu T."/>
            <person name="Mizushima-Sugano J."/>
            <person name="Satoh T."/>
            <person name="Shirai Y."/>
            <person name="Takahashi Y."/>
            <person name="Nakagawa K."/>
            <person name="Okumura K."/>
            <person name="Nagase T."/>
            <person name="Nomura N."/>
            <person name="Kikuchi H."/>
            <person name="Masuho Y."/>
            <person name="Yamashita R."/>
            <person name="Nakai K."/>
            <person name="Yada T."/>
            <person name="Nakamura Y."/>
            <person name="Ohara O."/>
            <person name="Isogai T."/>
            <person name="Sugano S."/>
        </authorList>
    </citation>
    <scope>NUCLEOTIDE SEQUENCE [LARGE SCALE MRNA] OF 370-714 (ISOFORM 1)</scope>
    <source>
        <tissue>Embryo</tissue>
        <tissue>Uterus</tissue>
    </source>
</reference>
<reference key="5">
    <citation type="journal article" date="2009" name="Anal. Chem.">
        <title>Lys-N and trypsin cover complementary parts of the phosphoproteome in a refined SCX-based approach.</title>
        <authorList>
            <person name="Gauci S."/>
            <person name="Helbig A.O."/>
            <person name="Slijper M."/>
            <person name="Krijgsveld J."/>
            <person name="Heck A.J."/>
            <person name="Mohammed S."/>
        </authorList>
    </citation>
    <scope>ACETYLATION [LARGE SCALE ANALYSIS] AT ALA-2</scope>
    <scope>CLEAVAGE OF INITIATOR METHIONINE [LARGE SCALE ANALYSIS]</scope>
    <scope>IDENTIFICATION BY MASS SPECTROMETRY [LARGE SCALE ANALYSIS]</scope>
</reference>
<reference key="6">
    <citation type="journal article" date="2009" name="Science">
        <title>Lysine acetylation targets protein complexes and co-regulates major cellular functions.</title>
        <authorList>
            <person name="Choudhary C."/>
            <person name="Kumar C."/>
            <person name="Gnad F."/>
            <person name="Nielsen M.L."/>
            <person name="Rehman M."/>
            <person name="Walther T.C."/>
            <person name="Olsen J.V."/>
            <person name="Mann M."/>
        </authorList>
    </citation>
    <scope>ACETYLATION [LARGE SCALE ANALYSIS] AT LYS-664</scope>
    <scope>IDENTIFICATION BY MASS SPECTROMETRY [LARGE SCALE ANALYSIS]</scope>
</reference>
<reference key="7">
    <citation type="journal article" date="2013" name="J. Proteome Res.">
        <title>Toward a comprehensive characterization of a human cancer cell phosphoproteome.</title>
        <authorList>
            <person name="Zhou H."/>
            <person name="Di Palma S."/>
            <person name="Preisinger C."/>
            <person name="Peng M."/>
            <person name="Polat A.N."/>
            <person name="Heck A.J."/>
            <person name="Mohammed S."/>
        </authorList>
    </citation>
    <scope>PHOSPHORYLATION [LARGE SCALE ANALYSIS] AT SER-7; SER-11 AND SER-344</scope>
    <scope>IDENTIFICATION BY MASS SPECTROMETRY [LARGE SCALE ANALYSIS]</scope>
    <source>
        <tissue>Cervix carcinoma</tissue>
        <tissue>Erythroleukemia</tissue>
    </source>
</reference>
<dbReference type="EMBL" id="AY500994">
    <property type="protein sequence ID" value="AAR97615.1"/>
    <property type="molecule type" value="mRNA"/>
</dbReference>
<dbReference type="EMBL" id="AY500996">
    <property type="protein sequence ID" value="AAR97617.1"/>
    <property type="molecule type" value="Genomic_DNA"/>
</dbReference>
<dbReference type="EMBL" id="U84971">
    <property type="protein sequence ID" value="AAB60856.1"/>
    <property type="molecule type" value="mRNA"/>
</dbReference>
<dbReference type="EMBL" id="BC002828">
    <property type="protein sequence ID" value="AAH02828.1"/>
    <property type="molecule type" value="mRNA"/>
</dbReference>
<dbReference type="EMBL" id="BC029382">
    <property type="protein sequence ID" value="AAH29382.2"/>
    <property type="status" value="ALT_SEQ"/>
    <property type="molecule type" value="mRNA"/>
</dbReference>
<dbReference type="EMBL" id="AK001145">
    <property type="protein sequence ID" value="BAA91519.1"/>
    <property type="status" value="ALT_INIT"/>
    <property type="molecule type" value="mRNA"/>
</dbReference>
<dbReference type="CCDS" id="CCDS4035.1">
    <molecule id="Q8N302-1"/>
</dbReference>
<dbReference type="RefSeq" id="NP_060516.2">
    <molecule id="Q8N302-1"/>
    <property type="nucleotide sequence ID" value="NM_018046.4"/>
</dbReference>
<dbReference type="SMR" id="Q8N302"/>
<dbReference type="BioGRID" id="120419">
    <property type="interactions" value="62"/>
</dbReference>
<dbReference type="CORUM" id="Q8N302"/>
<dbReference type="FunCoup" id="Q8N302">
    <property type="interactions" value="1454"/>
</dbReference>
<dbReference type="IntAct" id="Q8N302">
    <property type="interactions" value="689"/>
</dbReference>
<dbReference type="MINT" id="Q8N302"/>
<dbReference type="STRING" id="9606.ENSP00000316109"/>
<dbReference type="GlyGen" id="Q8N302">
    <property type="glycosylation" value="2 sites"/>
</dbReference>
<dbReference type="iPTMnet" id="Q8N302"/>
<dbReference type="PhosphoSitePlus" id="Q8N302"/>
<dbReference type="BioMuta" id="AGGF1"/>
<dbReference type="DMDM" id="45477317"/>
<dbReference type="jPOST" id="Q8N302"/>
<dbReference type="MassIVE" id="Q8N302"/>
<dbReference type="PaxDb" id="9606-ENSP00000316109"/>
<dbReference type="PeptideAtlas" id="Q8N302"/>
<dbReference type="ProteomicsDB" id="71746">
    <molecule id="Q8N302-1"/>
</dbReference>
<dbReference type="ProteomicsDB" id="71747">
    <molecule id="Q8N302-2"/>
</dbReference>
<dbReference type="ProteomicsDB" id="71748">
    <molecule id="Q8N302-3"/>
</dbReference>
<dbReference type="Pumba" id="Q8N302"/>
<dbReference type="Antibodypedia" id="12482">
    <property type="antibodies" value="266 antibodies from 28 providers"/>
</dbReference>
<dbReference type="DNASU" id="55109"/>
<dbReference type="Ensembl" id="ENST00000312916.12">
    <molecule id="Q8N302-1"/>
    <property type="protein sequence ID" value="ENSP00000316109.7"/>
    <property type="gene ID" value="ENSG00000164252.13"/>
</dbReference>
<dbReference type="Ensembl" id="ENST00000506806.1">
    <molecule id="Q8N302-3"/>
    <property type="protein sequence ID" value="ENSP00000424733.1"/>
    <property type="gene ID" value="ENSG00000164252.13"/>
</dbReference>
<dbReference type="GeneID" id="55109"/>
<dbReference type="KEGG" id="hsa:55109"/>
<dbReference type="MANE-Select" id="ENST00000312916.12">
    <property type="protein sequence ID" value="ENSP00000316109.7"/>
    <property type="RefSeq nucleotide sequence ID" value="NM_018046.5"/>
    <property type="RefSeq protein sequence ID" value="NP_060516.2"/>
</dbReference>
<dbReference type="UCSC" id="uc003kes.4">
    <molecule id="Q8N302-1"/>
    <property type="organism name" value="human"/>
</dbReference>
<dbReference type="AGR" id="HGNC:24684"/>
<dbReference type="CTD" id="55109"/>
<dbReference type="DisGeNET" id="55109"/>
<dbReference type="GeneCards" id="AGGF1"/>
<dbReference type="HGNC" id="HGNC:24684">
    <property type="gene designation" value="AGGF1"/>
</dbReference>
<dbReference type="HPA" id="ENSG00000164252">
    <property type="expression patterns" value="Low tissue specificity"/>
</dbReference>
<dbReference type="MalaCards" id="AGGF1"/>
<dbReference type="MIM" id="608464">
    <property type="type" value="gene"/>
</dbReference>
<dbReference type="neXtProt" id="NX_Q8N302"/>
<dbReference type="OpenTargets" id="ENSG00000164252"/>
<dbReference type="Orphanet" id="90308">
    <property type="disease" value="Klippel-Trenaunay syndrome"/>
</dbReference>
<dbReference type="PharmGKB" id="PA134951291"/>
<dbReference type="VEuPathDB" id="HostDB:ENSG00000164252"/>
<dbReference type="eggNOG" id="KOG0154">
    <property type="taxonomic scope" value="Eukaryota"/>
</dbReference>
<dbReference type="GeneTree" id="ENSGT00730000111121"/>
<dbReference type="HOGENOM" id="CLU_023817_1_0_1"/>
<dbReference type="InParanoid" id="Q8N302"/>
<dbReference type="OMA" id="QLHKTHA"/>
<dbReference type="OrthoDB" id="2538319at2759"/>
<dbReference type="PAN-GO" id="Q8N302">
    <property type="GO annotations" value="1 GO annotation based on evolutionary models"/>
</dbReference>
<dbReference type="PhylomeDB" id="Q8N302"/>
<dbReference type="TreeFam" id="TF315789"/>
<dbReference type="PathwayCommons" id="Q8N302"/>
<dbReference type="Reactome" id="R-HSA-6802952">
    <property type="pathway name" value="Signaling by BRAF and RAF1 fusions"/>
</dbReference>
<dbReference type="SignaLink" id="Q8N302"/>
<dbReference type="SIGNOR" id="Q8N302"/>
<dbReference type="BioGRID-ORCS" id="55109">
    <property type="hits" value="13 hits in 1152 CRISPR screens"/>
</dbReference>
<dbReference type="ChiTaRS" id="AGGF1">
    <property type="organism name" value="human"/>
</dbReference>
<dbReference type="GeneWiki" id="AGGF1"/>
<dbReference type="GenomeRNAi" id="55109"/>
<dbReference type="Pharos" id="Q8N302">
    <property type="development level" value="Tbio"/>
</dbReference>
<dbReference type="PRO" id="PR:Q8N302"/>
<dbReference type="Proteomes" id="UP000005640">
    <property type="component" value="Chromosome 5"/>
</dbReference>
<dbReference type="RNAct" id="Q8N302">
    <property type="molecule type" value="protein"/>
</dbReference>
<dbReference type="Bgee" id="ENSG00000164252">
    <property type="expression patterns" value="Expressed in choroid plexus epithelium and 200 other cell types or tissues"/>
</dbReference>
<dbReference type="ExpressionAtlas" id="Q8N302">
    <property type="expression patterns" value="baseline and differential"/>
</dbReference>
<dbReference type="GO" id="GO:0005737">
    <property type="term" value="C:cytoplasm"/>
    <property type="evidence" value="ECO:0000314"/>
    <property type="project" value="UniProtKB"/>
</dbReference>
<dbReference type="GO" id="GO:0005576">
    <property type="term" value="C:extracellular region"/>
    <property type="evidence" value="ECO:0000314"/>
    <property type="project" value="UniProtKB"/>
</dbReference>
<dbReference type="GO" id="GO:0048471">
    <property type="term" value="C:perinuclear region of cytoplasm"/>
    <property type="evidence" value="ECO:0000314"/>
    <property type="project" value="UniProtKB"/>
</dbReference>
<dbReference type="GO" id="GO:0042802">
    <property type="term" value="F:identical protein binding"/>
    <property type="evidence" value="ECO:0000353"/>
    <property type="project" value="IntAct"/>
</dbReference>
<dbReference type="GO" id="GO:0003676">
    <property type="term" value="F:nucleic acid binding"/>
    <property type="evidence" value="ECO:0007669"/>
    <property type="project" value="InterPro"/>
</dbReference>
<dbReference type="GO" id="GO:0001525">
    <property type="term" value="P:angiogenesis"/>
    <property type="evidence" value="ECO:0007669"/>
    <property type="project" value="UniProtKB-KW"/>
</dbReference>
<dbReference type="GO" id="GO:0007155">
    <property type="term" value="P:cell adhesion"/>
    <property type="evidence" value="ECO:0000314"/>
    <property type="project" value="UniProtKB"/>
</dbReference>
<dbReference type="GO" id="GO:0045766">
    <property type="term" value="P:positive regulation of angiogenesis"/>
    <property type="evidence" value="ECO:0000314"/>
    <property type="project" value="UniProtKB"/>
</dbReference>
<dbReference type="GO" id="GO:0001938">
    <property type="term" value="P:positive regulation of endothelial cell proliferation"/>
    <property type="evidence" value="ECO:0000314"/>
    <property type="project" value="UniProtKB"/>
</dbReference>
<dbReference type="GO" id="GO:0001570">
    <property type="term" value="P:vasculogenesis"/>
    <property type="evidence" value="ECO:0000304"/>
    <property type="project" value="UniProtKB"/>
</dbReference>
<dbReference type="CDD" id="cd22686">
    <property type="entry name" value="FHA_AGGF1"/>
    <property type="match status" value="1"/>
</dbReference>
<dbReference type="CDD" id="cd16164">
    <property type="entry name" value="OCRE_VG5Q"/>
    <property type="match status" value="1"/>
</dbReference>
<dbReference type="FunFam" id="2.60.200.20:FF:000016">
    <property type="entry name" value="Angiogenic factor with G patch and FHA domains 1"/>
    <property type="match status" value="1"/>
</dbReference>
<dbReference type="Gene3D" id="2.60.200.20">
    <property type="match status" value="1"/>
</dbReference>
<dbReference type="InterPro" id="IPR053027">
    <property type="entry name" value="AGGF1"/>
</dbReference>
<dbReference type="InterPro" id="IPR035624">
    <property type="entry name" value="AGGF1_OCRE"/>
</dbReference>
<dbReference type="InterPro" id="IPR000253">
    <property type="entry name" value="FHA_dom"/>
</dbReference>
<dbReference type="InterPro" id="IPR000467">
    <property type="entry name" value="G_patch_dom"/>
</dbReference>
<dbReference type="InterPro" id="IPR041591">
    <property type="entry name" value="OCRE"/>
</dbReference>
<dbReference type="InterPro" id="IPR008984">
    <property type="entry name" value="SMAD_FHA_dom_sf"/>
</dbReference>
<dbReference type="PANTHER" id="PTHR23106">
    <property type="entry name" value="ANGIOGENIC FACTOR WITH G PATCH AND FHA DOMAINS 1"/>
    <property type="match status" value="1"/>
</dbReference>
<dbReference type="PANTHER" id="PTHR23106:SF24">
    <property type="entry name" value="ANGIOGENIC FACTOR WITH G PATCH AND FHA DOMAINS 1"/>
    <property type="match status" value="1"/>
</dbReference>
<dbReference type="Pfam" id="PF00498">
    <property type="entry name" value="FHA"/>
    <property type="match status" value="1"/>
</dbReference>
<dbReference type="Pfam" id="PF01585">
    <property type="entry name" value="G-patch"/>
    <property type="match status" value="1"/>
</dbReference>
<dbReference type="Pfam" id="PF17780">
    <property type="entry name" value="OCRE"/>
    <property type="match status" value="1"/>
</dbReference>
<dbReference type="SMART" id="SM00240">
    <property type="entry name" value="FHA"/>
    <property type="match status" value="1"/>
</dbReference>
<dbReference type="SMART" id="SM00443">
    <property type="entry name" value="G_patch"/>
    <property type="match status" value="1"/>
</dbReference>
<dbReference type="SUPFAM" id="SSF49879">
    <property type="entry name" value="SMAD/FHA domain"/>
    <property type="match status" value="1"/>
</dbReference>
<dbReference type="PROSITE" id="PS50006">
    <property type="entry name" value="FHA_DOMAIN"/>
    <property type="match status" value="1"/>
</dbReference>
<dbReference type="PROSITE" id="PS50174">
    <property type="entry name" value="G_PATCH"/>
    <property type="match status" value="1"/>
</dbReference>
<keyword id="KW-0007">Acetylation</keyword>
<keyword id="KW-0025">Alternative splicing</keyword>
<keyword id="KW-0037">Angiogenesis</keyword>
<keyword id="KW-0175">Coiled coil</keyword>
<keyword id="KW-0963">Cytoplasm</keyword>
<keyword id="KW-0217">Developmental protein</keyword>
<keyword id="KW-0221">Differentiation</keyword>
<keyword id="KW-0597">Phosphoprotein</keyword>
<keyword id="KW-1267">Proteomics identification</keyword>
<keyword id="KW-1185">Reference proteome</keyword>
<keyword id="KW-0964">Secreted</keyword>
<proteinExistence type="evidence at protein level"/>
<evidence type="ECO:0000255" key="1"/>
<evidence type="ECO:0000255" key="2">
    <source>
        <dbReference type="PROSITE-ProRule" id="PRU00086"/>
    </source>
</evidence>
<evidence type="ECO:0000255" key="3">
    <source>
        <dbReference type="PROSITE-ProRule" id="PRU00092"/>
    </source>
</evidence>
<evidence type="ECO:0000256" key="4">
    <source>
        <dbReference type="SAM" id="MobiDB-lite"/>
    </source>
</evidence>
<evidence type="ECO:0000269" key="5">
    <source>
    </source>
</evidence>
<evidence type="ECO:0000269" key="6">
    <source>
    </source>
</evidence>
<evidence type="ECO:0000303" key="7">
    <source>
    </source>
</evidence>
<evidence type="ECO:0000303" key="8">
    <source ref="2"/>
</evidence>
<evidence type="ECO:0000305" key="9"/>
<evidence type="ECO:0007744" key="10">
    <source>
    </source>
</evidence>
<evidence type="ECO:0007744" key="11">
    <source>
    </source>
</evidence>
<evidence type="ECO:0007744" key="12">
    <source>
    </source>
</evidence>